<gene>
    <name evidence="1" type="primary">truA</name>
    <name type="ordered locus">Syncc9902_1980</name>
</gene>
<keyword id="KW-0413">Isomerase</keyword>
<keyword id="KW-1185">Reference proteome</keyword>
<keyword id="KW-0819">tRNA processing</keyword>
<feature type="chain" id="PRO_1000017202" description="tRNA pseudouridine synthase A">
    <location>
        <begin position="1"/>
        <end position="300"/>
    </location>
</feature>
<feature type="active site" description="Nucleophile" evidence="1">
    <location>
        <position position="67"/>
    </location>
</feature>
<feature type="binding site" evidence="1">
    <location>
        <position position="125"/>
    </location>
    <ligand>
        <name>substrate</name>
    </ligand>
</feature>
<proteinExistence type="inferred from homology"/>
<protein>
    <recommendedName>
        <fullName evidence="1">tRNA pseudouridine synthase A</fullName>
        <ecNumber evidence="1">5.4.99.12</ecNumber>
    </recommendedName>
    <alternativeName>
        <fullName evidence="1">tRNA pseudouridine(38-40) synthase</fullName>
    </alternativeName>
    <alternativeName>
        <fullName evidence="1">tRNA pseudouridylate synthase I</fullName>
    </alternativeName>
    <alternativeName>
        <fullName evidence="1">tRNA-uridine isomerase I</fullName>
    </alternativeName>
</protein>
<organism>
    <name type="scientific">Synechococcus sp. (strain CC9902)</name>
    <dbReference type="NCBI Taxonomy" id="316279"/>
    <lineage>
        <taxon>Bacteria</taxon>
        <taxon>Bacillati</taxon>
        <taxon>Cyanobacteriota</taxon>
        <taxon>Cyanophyceae</taxon>
        <taxon>Synechococcales</taxon>
        <taxon>Synechococcaceae</taxon>
        <taxon>Synechococcus</taxon>
    </lineage>
</organism>
<accession>Q3AW68</accession>
<dbReference type="EC" id="5.4.99.12" evidence="1"/>
<dbReference type="EMBL" id="CP000097">
    <property type="protein sequence ID" value="ABB26938.1"/>
    <property type="molecule type" value="Genomic_DNA"/>
</dbReference>
<dbReference type="RefSeq" id="WP_011360732.1">
    <property type="nucleotide sequence ID" value="NC_007513.1"/>
</dbReference>
<dbReference type="SMR" id="Q3AW68"/>
<dbReference type="STRING" id="316279.Syncc9902_1980"/>
<dbReference type="KEGG" id="sye:Syncc9902_1980"/>
<dbReference type="eggNOG" id="COG0101">
    <property type="taxonomic scope" value="Bacteria"/>
</dbReference>
<dbReference type="HOGENOM" id="CLU_014673_0_1_3"/>
<dbReference type="OrthoDB" id="9811823at2"/>
<dbReference type="Proteomes" id="UP000002712">
    <property type="component" value="Chromosome"/>
</dbReference>
<dbReference type="GO" id="GO:0003723">
    <property type="term" value="F:RNA binding"/>
    <property type="evidence" value="ECO:0007669"/>
    <property type="project" value="InterPro"/>
</dbReference>
<dbReference type="GO" id="GO:0160147">
    <property type="term" value="F:tRNA pseudouridine(38-40) synthase activity"/>
    <property type="evidence" value="ECO:0007669"/>
    <property type="project" value="UniProtKB-EC"/>
</dbReference>
<dbReference type="GO" id="GO:0031119">
    <property type="term" value="P:tRNA pseudouridine synthesis"/>
    <property type="evidence" value="ECO:0007669"/>
    <property type="project" value="UniProtKB-UniRule"/>
</dbReference>
<dbReference type="CDD" id="cd02570">
    <property type="entry name" value="PseudoU_synth_EcTruA"/>
    <property type="match status" value="1"/>
</dbReference>
<dbReference type="FunFam" id="3.30.70.580:FF:000001">
    <property type="entry name" value="tRNA pseudouridine synthase A"/>
    <property type="match status" value="1"/>
</dbReference>
<dbReference type="Gene3D" id="3.30.70.660">
    <property type="entry name" value="Pseudouridine synthase I, catalytic domain, C-terminal subdomain"/>
    <property type="match status" value="1"/>
</dbReference>
<dbReference type="Gene3D" id="3.30.70.580">
    <property type="entry name" value="Pseudouridine synthase I, catalytic domain, N-terminal subdomain"/>
    <property type="match status" value="1"/>
</dbReference>
<dbReference type="HAMAP" id="MF_00171">
    <property type="entry name" value="TruA"/>
    <property type="match status" value="1"/>
</dbReference>
<dbReference type="InterPro" id="IPR020103">
    <property type="entry name" value="PsdUridine_synth_cat_dom_sf"/>
</dbReference>
<dbReference type="InterPro" id="IPR001406">
    <property type="entry name" value="PsdUridine_synth_TruA"/>
</dbReference>
<dbReference type="InterPro" id="IPR020097">
    <property type="entry name" value="PsdUridine_synth_TruA_a/b_dom"/>
</dbReference>
<dbReference type="InterPro" id="IPR020095">
    <property type="entry name" value="PsdUridine_synth_TruA_C"/>
</dbReference>
<dbReference type="InterPro" id="IPR020094">
    <property type="entry name" value="TruA/RsuA/RluB/E/F_N"/>
</dbReference>
<dbReference type="NCBIfam" id="TIGR00071">
    <property type="entry name" value="hisT_truA"/>
    <property type="match status" value="1"/>
</dbReference>
<dbReference type="PANTHER" id="PTHR11142">
    <property type="entry name" value="PSEUDOURIDYLATE SYNTHASE"/>
    <property type="match status" value="1"/>
</dbReference>
<dbReference type="PANTHER" id="PTHR11142:SF0">
    <property type="entry name" value="TRNA PSEUDOURIDINE SYNTHASE-LIKE 1"/>
    <property type="match status" value="1"/>
</dbReference>
<dbReference type="Pfam" id="PF01416">
    <property type="entry name" value="PseudoU_synth_1"/>
    <property type="match status" value="2"/>
</dbReference>
<dbReference type="PIRSF" id="PIRSF001430">
    <property type="entry name" value="tRNA_psdUrid_synth"/>
    <property type="match status" value="1"/>
</dbReference>
<dbReference type="SUPFAM" id="SSF55120">
    <property type="entry name" value="Pseudouridine synthase"/>
    <property type="match status" value="1"/>
</dbReference>
<sequence>MTAEPSSAPPEQPILRRIALSLQYEGSDFCGWQRQNNARSVQAVLETAIAQLDPLRPIQSFAAGRTDAGVHAAAQVVHFDCSGPIPAAKWAPALNGRLPASIRVRESVERPRDWHACYSAVYRRYRYIIHNGRRPNLFLTPWTWHRYHHRLNEENMRVALEGMIGLHDFAAFMRAGSRRPHSRTTIQDVLVEREGDLIRVEIQASGFLYGMVRLLMAQLVAVGEHRLSVKAFEQRWRDRRRDQVREAAPARGLCLLRAGYAEPIFSEAGWYDCQPWFSLATDDPPPDPPCFAKDEQQELQ</sequence>
<comment type="function">
    <text evidence="1">Formation of pseudouridine at positions 38, 39 and 40 in the anticodon stem and loop of transfer RNAs.</text>
</comment>
<comment type="catalytic activity">
    <reaction evidence="1">
        <text>uridine(38/39/40) in tRNA = pseudouridine(38/39/40) in tRNA</text>
        <dbReference type="Rhea" id="RHEA:22376"/>
        <dbReference type="Rhea" id="RHEA-COMP:10085"/>
        <dbReference type="Rhea" id="RHEA-COMP:10087"/>
        <dbReference type="ChEBI" id="CHEBI:65314"/>
        <dbReference type="ChEBI" id="CHEBI:65315"/>
        <dbReference type="EC" id="5.4.99.12"/>
    </reaction>
</comment>
<comment type="subunit">
    <text evidence="1">Homodimer.</text>
</comment>
<comment type="similarity">
    <text evidence="1">Belongs to the tRNA pseudouridine synthase TruA family.</text>
</comment>
<name>TRUA_SYNS9</name>
<evidence type="ECO:0000255" key="1">
    <source>
        <dbReference type="HAMAP-Rule" id="MF_00171"/>
    </source>
</evidence>
<reference key="1">
    <citation type="submission" date="2005-08" db="EMBL/GenBank/DDBJ databases">
        <title>Complete sequence of Synechococcus sp. CC9902.</title>
        <authorList>
            <person name="Copeland A."/>
            <person name="Lucas S."/>
            <person name="Lapidus A."/>
            <person name="Barry K."/>
            <person name="Detter J.C."/>
            <person name="Glavina T."/>
            <person name="Hammon N."/>
            <person name="Israni S."/>
            <person name="Pitluck S."/>
            <person name="Martinez M."/>
            <person name="Schmutz J."/>
            <person name="Larimer F."/>
            <person name="Land M."/>
            <person name="Kyrpides N."/>
            <person name="Ivanova N."/>
            <person name="Richardson P."/>
        </authorList>
    </citation>
    <scope>NUCLEOTIDE SEQUENCE [LARGE SCALE GENOMIC DNA]</scope>
    <source>
        <strain>CC9902</strain>
    </source>
</reference>